<keyword id="KW-0028">Amino-acid biosynthesis</keyword>
<keyword id="KW-0055">Arginine biosynthesis</keyword>
<keyword id="KW-0963">Cytoplasm</keyword>
<keyword id="KW-0808">Transferase</keyword>
<organism>
    <name type="scientific">Rhizobium johnstonii (strain DSM 114642 / LMG 32736 / 3841)</name>
    <name type="common">Rhizobium leguminosarum bv. viciae</name>
    <dbReference type="NCBI Taxonomy" id="216596"/>
    <lineage>
        <taxon>Bacteria</taxon>
        <taxon>Pseudomonadati</taxon>
        <taxon>Pseudomonadota</taxon>
        <taxon>Alphaproteobacteria</taxon>
        <taxon>Hyphomicrobiales</taxon>
        <taxon>Rhizobiaceae</taxon>
        <taxon>Rhizobium/Agrobacterium group</taxon>
        <taxon>Rhizobium</taxon>
        <taxon>Rhizobium johnstonii</taxon>
    </lineage>
</organism>
<dbReference type="EC" id="2.1.3.3" evidence="2"/>
<dbReference type="EMBL" id="AM236080">
    <property type="protein sequence ID" value="CAK06044.1"/>
    <property type="molecule type" value="Genomic_DNA"/>
</dbReference>
<dbReference type="RefSeq" id="WP_011650338.1">
    <property type="nucleotide sequence ID" value="NC_008380.1"/>
</dbReference>
<dbReference type="SMR" id="Q1MLV9"/>
<dbReference type="EnsemblBacteria" id="CAK06044">
    <property type="protein sequence ID" value="CAK06044"/>
    <property type="gene ID" value="RL0550"/>
</dbReference>
<dbReference type="KEGG" id="rle:RL0550"/>
<dbReference type="eggNOG" id="COG0078">
    <property type="taxonomic scope" value="Bacteria"/>
</dbReference>
<dbReference type="HOGENOM" id="CLU_043846_3_2_5"/>
<dbReference type="UniPathway" id="UPA00068">
    <property type="reaction ID" value="UER00112"/>
</dbReference>
<dbReference type="Proteomes" id="UP000006575">
    <property type="component" value="Chromosome"/>
</dbReference>
<dbReference type="GO" id="GO:0005737">
    <property type="term" value="C:cytoplasm"/>
    <property type="evidence" value="ECO:0007669"/>
    <property type="project" value="UniProtKB-SubCell"/>
</dbReference>
<dbReference type="GO" id="GO:0016597">
    <property type="term" value="F:amino acid binding"/>
    <property type="evidence" value="ECO:0007669"/>
    <property type="project" value="InterPro"/>
</dbReference>
<dbReference type="GO" id="GO:0004585">
    <property type="term" value="F:ornithine carbamoyltransferase activity"/>
    <property type="evidence" value="ECO:0007669"/>
    <property type="project" value="UniProtKB-UniRule"/>
</dbReference>
<dbReference type="GO" id="GO:0042450">
    <property type="term" value="P:arginine biosynthetic process via ornithine"/>
    <property type="evidence" value="ECO:0007669"/>
    <property type="project" value="TreeGrafter"/>
</dbReference>
<dbReference type="GO" id="GO:0019240">
    <property type="term" value="P:citrulline biosynthetic process"/>
    <property type="evidence" value="ECO:0007669"/>
    <property type="project" value="TreeGrafter"/>
</dbReference>
<dbReference type="GO" id="GO:0006526">
    <property type="term" value="P:L-arginine biosynthetic process"/>
    <property type="evidence" value="ECO:0007669"/>
    <property type="project" value="UniProtKB-UniRule"/>
</dbReference>
<dbReference type="FunFam" id="3.40.50.1370:FF:000008">
    <property type="entry name" value="Ornithine carbamoyltransferase"/>
    <property type="match status" value="1"/>
</dbReference>
<dbReference type="Gene3D" id="3.40.50.1370">
    <property type="entry name" value="Aspartate/ornithine carbamoyltransferase"/>
    <property type="match status" value="2"/>
</dbReference>
<dbReference type="HAMAP" id="MF_01109">
    <property type="entry name" value="OTCase"/>
    <property type="match status" value="1"/>
</dbReference>
<dbReference type="InterPro" id="IPR006132">
    <property type="entry name" value="Asp/Orn_carbamoyltranf_P-bd"/>
</dbReference>
<dbReference type="InterPro" id="IPR006130">
    <property type="entry name" value="Asp/Orn_carbamoylTrfase"/>
</dbReference>
<dbReference type="InterPro" id="IPR036901">
    <property type="entry name" value="Asp/Orn_carbamoylTrfase_sf"/>
</dbReference>
<dbReference type="InterPro" id="IPR006131">
    <property type="entry name" value="Asp_carbamoyltransf_Asp/Orn-bd"/>
</dbReference>
<dbReference type="InterPro" id="IPR002292">
    <property type="entry name" value="Orn/put_carbamltrans"/>
</dbReference>
<dbReference type="InterPro" id="IPR024904">
    <property type="entry name" value="OTCase_ArgI"/>
</dbReference>
<dbReference type="NCBIfam" id="TIGR00658">
    <property type="entry name" value="orni_carb_tr"/>
    <property type="match status" value="1"/>
</dbReference>
<dbReference type="NCBIfam" id="NF001986">
    <property type="entry name" value="PRK00779.1"/>
    <property type="match status" value="1"/>
</dbReference>
<dbReference type="PANTHER" id="PTHR45753">
    <property type="entry name" value="ORNITHINE CARBAMOYLTRANSFERASE, MITOCHONDRIAL"/>
    <property type="match status" value="1"/>
</dbReference>
<dbReference type="PANTHER" id="PTHR45753:SF3">
    <property type="entry name" value="ORNITHINE TRANSCARBAMYLASE, MITOCHONDRIAL"/>
    <property type="match status" value="1"/>
</dbReference>
<dbReference type="Pfam" id="PF00185">
    <property type="entry name" value="OTCace"/>
    <property type="match status" value="1"/>
</dbReference>
<dbReference type="Pfam" id="PF02729">
    <property type="entry name" value="OTCace_N"/>
    <property type="match status" value="1"/>
</dbReference>
<dbReference type="PRINTS" id="PR00100">
    <property type="entry name" value="AOTCASE"/>
</dbReference>
<dbReference type="PRINTS" id="PR00102">
    <property type="entry name" value="OTCASE"/>
</dbReference>
<dbReference type="SUPFAM" id="SSF53671">
    <property type="entry name" value="Aspartate/ornithine carbamoyltransferase"/>
    <property type="match status" value="1"/>
</dbReference>
<dbReference type="PROSITE" id="PS00097">
    <property type="entry name" value="CARBAMOYLTRANSFERASE"/>
    <property type="match status" value="1"/>
</dbReference>
<feature type="chain" id="PRO_1000137102" description="Ornithine carbamoyltransferase">
    <location>
        <begin position="1"/>
        <end position="304"/>
    </location>
</feature>
<feature type="binding site" evidence="2">
    <location>
        <begin position="53"/>
        <end position="56"/>
    </location>
    <ligand>
        <name>carbamoyl phosphate</name>
        <dbReference type="ChEBI" id="CHEBI:58228"/>
    </ligand>
</feature>
<feature type="binding site" evidence="2">
    <location>
        <position position="80"/>
    </location>
    <ligand>
        <name>carbamoyl phosphate</name>
        <dbReference type="ChEBI" id="CHEBI:58228"/>
    </ligand>
</feature>
<feature type="binding site" evidence="2">
    <location>
        <position position="104"/>
    </location>
    <ligand>
        <name>carbamoyl phosphate</name>
        <dbReference type="ChEBI" id="CHEBI:58228"/>
    </ligand>
</feature>
<feature type="binding site" evidence="2">
    <location>
        <begin position="131"/>
        <end position="134"/>
    </location>
    <ligand>
        <name>carbamoyl phosphate</name>
        <dbReference type="ChEBI" id="CHEBI:58228"/>
    </ligand>
</feature>
<feature type="binding site" evidence="2">
    <location>
        <position position="162"/>
    </location>
    <ligand>
        <name>L-ornithine</name>
        <dbReference type="ChEBI" id="CHEBI:46911"/>
    </ligand>
</feature>
<feature type="binding site" evidence="2">
    <location>
        <position position="222"/>
    </location>
    <ligand>
        <name>L-ornithine</name>
        <dbReference type="ChEBI" id="CHEBI:46911"/>
    </ligand>
</feature>
<feature type="binding site" evidence="2">
    <location>
        <begin position="226"/>
        <end position="227"/>
    </location>
    <ligand>
        <name>L-ornithine</name>
        <dbReference type="ChEBI" id="CHEBI:46911"/>
    </ligand>
</feature>
<feature type="binding site" evidence="2">
    <location>
        <begin position="261"/>
        <end position="262"/>
    </location>
    <ligand>
        <name>carbamoyl phosphate</name>
        <dbReference type="ChEBI" id="CHEBI:58228"/>
    </ligand>
</feature>
<feature type="binding site" evidence="2">
    <location>
        <position position="289"/>
    </location>
    <ligand>
        <name>carbamoyl phosphate</name>
        <dbReference type="ChEBI" id="CHEBI:58228"/>
    </ligand>
</feature>
<protein>
    <recommendedName>
        <fullName evidence="2">Ornithine carbamoyltransferase</fullName>
        <shortName evidence="2">OTCase</shortName>
        <ecNumber evidence="2">2.1.3.3</ecNumber>
    </recommendedName>
</protein>
<sequence length="304" mass="33396">MSPKHFLDLSAVTSADLRTIMNDALARKQAFKAGTGDKPLAGKMLAMIFEKPSTRTRVSFDVGMRQLGGETLFLSGTEMQLGRAETIGDTAKVLSRYVDAIMIRTTEHSRLLELAQHATVPVINALTDDTHPCQIMADIMTFEEHRGPIKGKTIAWTGDGNNVLHSLVEGAARFGYRMNMAVPLGSEPKDHYLNWARNEGAEIMLCHDADRAVAGVDCVVTDTWVSMNQEHRARGHNVFQPYQVNAALMAKAGNDALFMHCLPAHRGEEVTDDVIDGPQSVVFDEAENRLHAQKSILAWCLGAI</sequence>
<name>OTC_RHIJ3</name>
<evidence type="ECO:0000250" key="1"/>
<evidence type="ECO:0000255" key="2">
    <source>
        <dbReference type="HAMAP-Rule" id="MF_01109"/>
    </source>
</evidence>
<reference key="1">
    <citation type="journal article" date="2006" name="Genome Biol.">
        <title>The genome of Rhizobium leguminosarum has recognizable core and accessory components.</title>
        <authorList>
            <person name="Young J.P.W."/>
            <person name="Crossman L.C."/>
            <person name="Johnston A.W.B."/>
            <person name="Thomson N.R."/>
            <person name="Ghazoui Z.F."/>
            <person name="Hull K.H."/>
            <person name="Wexler M."/>
            <person name="Curson A.R.J."/>
            <person name="Todd J.D."/>
            <person name="Poole P.S."/>
            <person name="Mauchline T.H."/>
            <person name="East A.K."/>
            <person name="Quail M.A."/>
            <person name="Churcher C."/>
            <person name="Arrowsmith C."/>
            <person name="Cherevach I."/>
            <person name="Chillingworth T."/>
            <person name="Clarke K."/>
            <person name="Cronin A."/>
            <person name="Davis P."/>
            <person name="Fraser A."/>
            <person name="Hance Z."/>
            <person name="Hauser H."/>
            <person name="Jagels K."/>
            <person name="Moule S."/>
            <person name="Mungall K."/>
            <person name="Norbertczak H."/>
            <person name="Rabbinowitsch E."/>
            <person name="Sanders M."/>
            <person name="Simmonds M."/>
            <person name="Whitehead S."/>
            <person name="Parkhill J."/>
        </authorList>
    </citation>
    <scope>NUCLEOTIDE SEQUENCE [LARGE SCALE GENOMIC DNA]</scope>
    <source>
        <strain>DSM 114642 / LMG 32736 / 3841</strain>
    </source>
</reference>
<comment type="function">
    <text evidence="1">Reversibly catalyzes the transfer of the carbamoyl group from carbamoyl phosphate (CP) to the N(epsilon) atom of ornithine (ORN) to produce L-citrulline.</text>
</comment>
<comment type="catalytic activity">
    <reaction evidence="2">
        <text>carbamoyl phosphate + L-ornithine = L-citrulline + phosphate + H(+)</text>
        <dbReference type="Rhea" id="RHEA:19513"/>
        <dbReference type="ChEBI" id="CHEBI:15378"/>
        <dbReference type="ChEBI" id="CHEBI:43474"/>
        <dbReference type="ChEBI" id="CHEBI:46911"/>
        <dbReference type="ChEBI" id="CHEBI:57743"/>
        <dbReference type="ChEBI" id="CHEBI:58228"/>
        <dbReference type="EC" id="2.1.3.3"/>
    </reaction>
</comment>
<comment type="pathway">
    <text evidence="2">Amino-acid biosynthesis; L-arginine biosynthesis; L-arginine from L-ornithine and carbamoyl phosphate: step 1/3.</text>
</comment>
<comment type="subcellular location">
    <subcellularLocation>
        <location evidence="2">Cytoplasm</location>
    </subcellularLocation>
</comment>
<comment type="similarity">
    <text evidence="2">Belongs to the aspartate/ornithine carbamoyltransferase superfamily. OTCase family.</text>
</comment>
<accession>Q1MLV9</accession>
<proteinExistence type="inferred from homology"/>
<gene>
    <name evidence="2" type="primary">argF</name>
    <name type="ordered locus">RL0550</name>
</gene>